<feature type="chain" id="PRO_0000164214" description="Probable multidrug resistance protein NorM">
    <location>
        <begin position="1"/>
        <end position="471"/>
    </location>
</feature>
<feature type="transmembrane region" description="Helical" evidence="2">
    <location>
        <begin position="38"/>
        <end position="58"/>
    </location>
</feature>
<feature type="transmembrane region" description="Helical" evidence="2">
    <location>
        <begin position="69"/>
        <end position="89"/>
    </location>
</feature>
<feature type="transmembrane region" description="Helical" evidence="2">
    <location>
        <begin position="114"/>
        <end position="134"/>
    </location>
</feature>
<feature type="transmembrane region" description="Helical" evidence="2">
    <location>
        <begin position="152"/>
        <end position="172"/>
    </location>
</feature>
<feature type="transmembrane region" description="Helical" evidence="2">
    <location>
        <begin position="197"/>
        <end position="217"/>
    </location>
</feature>
<feature type="transmembrane region" description="Helical" evidence="2">
    <location>
        <begin position="266"/>
        <end position="286"/>
    </location>
</feature>
<feature type="transmembrane region" description="Helical" evidence="2">
    <location>
        <begin position="289"/>
        <end position="309"/>
    </location>
</feature>
<feature type="transmembrane region" description="Helical" evidence="2">
    <location>
        <begin position="334"/>
        <end position="354"/>
    </location>
</feature>
<feature type="transmembrane region" description="Helical" evidence="2">
    <location>
        <begin position="370"/>
        <end position="390"/>
    </location>
</feature>
<feature type="transmembrane region" description="Helical" evidence="2">
    <location>
        <begin position="409"/>
        <end position="429"/>
    </location>
</feature>
<feature type="transmembrane region" description="Helical" evidence="2">
    <location>
        <begin position="434"/>
        <end position="454"/>
    </location>
</feature>
<comment type="function">
    <text evidence="1">Multidrug efflux pump.</text>
</comment>
<comment type="subcellular location">
    <subcellularLocation>
        <location evidence="1">Cell inner membrane</location>
        <topology evidence="1">Multi-pass membrane protein</topology>
    </subcellularLocation>
</comment>
<comment type="similarity">
    <text evidence="3">Belongs to the multi antimicrobial extrusion (MATE) (TC 2.A.66.1) family.</text>
</comment>
<accession>P58163</accession>
<name>NORM_CAUVC</name>
<keyword id="KW-0050">Antiport</keyword>
<keyword id="KW-0997">Cell inner membrane</keyword>
<keyword id="KW-1003">Cell membrane</keyword>
<keyword id="KW-0406">Ion transport</keyword>
<keyword id="KW-0472">Membrane</keyword>
<keyword id="KW-1185">Reference proteome</keyword>
<keyword id="KW-0812">Transmembrane</keyword>
<keyword id="KW-1133">Transmembrane helix</keyword>
<keyword id="KW-0813">Transport</keyword>
<sequence>MTVVTTMPRDAAGTALLPERPRGPIMTDLIELLRLAGPVVLSRLGIMVMGLTDAIVVGHFSAQQLGYHAMAWAPSSVFVTATVGLLVGVQVMTARAMGAGNPHETGAVLRRGLVYAGWLGFGSMALLALFGPMFLQAMGLKDGLAEGATLPLIVFSLSLPVYAISVVLTFWLEGLSRPGPGAAMMWLANVVNLGANLLLVPGVLGPPALGAVGGAWATFIARTALALALAIFVIRMKEARELGVFDKPARDRPAEIEQRRIGYGAGASNFFEVSAFAGMNLICGWISAVAVAAYTVVLNVSAIIFMVPLGVASATAVMVGRAYGARDPAGMTRAGWIAFAVIGVIGVLFGLLLYPTKHWVALAYTTDPAALALILPALVLACLFFAPDAVQVVAAQALRARGEVWVPTITHLISYALVMGPLAWWLAIPKGMGLNGVLVSIIVTSFLAAGFLLMRFRMLDWRDRKAAQEAA</sequence>
<protein>
    <recommendedName>
        <fullName>Probable multidrug resistance protein NorM</fullName>
    </recommendedName>
    <alternativeName>
        <fullName>Multidrug-efflux transporter</fullName>
    </alternativeName>
</protein>
<dbReference type="EMBL" id="AE005673">
    <property type="protein sequence ID" value="AAK23995.1"/>
    <property type="molecule type" value="Genomic_DNA"/>
</dbReference>
<dbReference type="PIR" id="G87499">
    <property type="entry name" value="G87499"/>
</dbReference>
<dbReference type="RefSeq" id="NP_420827.1">
    <property type="nucleotide sequence ID" value="NC_002696.2"/>
</dbReference>
<dbReference type="RefSeq" id="WP_010919886.1">
    <property type="nucleotide sequence ID" value="NC_002696.2"/>
</dbReference>
<dbReference type="SMR" id="P58163"/>
<dbReference type="STRING" id="190650.CC_2020"/>
<dbReference type="TCDB" id="2.A.66.1.27">
    <property type="family name" value="the multidrug/oligosaccharidyl-lipid/polysaccharide (mop) flippase superfamily"/>
</dbReference>
<dbReference type="EnsemblBacteria" id="AAK23995">
    <property type="protein sequence ID" value="AAK23995"/>
    <property type="gene ID" value="CC_2020"/>
</dbReference>
<dbReference type="KEGG" id="ccr:CC_2020"/>
<dbReference type="PATRIC" id="fig|190650.5.peg.2040"/>
<dbReference type="eggNOG" id="COG0534">
    <property type="taxonomic scope" value="Bacteria"/>
</dbReference>
<dbReference type="HOGENOM" id="CLU_012893_6_4_5"/>
<dbReference type="BioCyc" id="CAULO:CC2020-MONOMER"/>
<dbReference type="Proteomes" id="UP000001816">
    <property type="component" value="Chromosome"/>
</dbReference>
<dbReference type="GO" id="GO:0005886">
    <property type="term" value="C:plasma membrane"/>
    <property type="evidence" value="ECO:0007669"/>
    <property type="project" value="UniProtKB-SubCell"/>
</dbReference>
<dbReference type="GO" id="GO:0015297">
    <property type="term" value="F:antiporter activity"/>
    <property type="evidence" value="ECO:0007669"/>
    <property type="project" value="UniProtKB-KW"/>
</dbReference>
<dbReference type="GO" id="GO:0042910">
    <property type="term" value="F:xenobiotic transmembrane transporter activity"/>
    <property type="evidence" value="ECO:0007669"/>
    <property type="project" value="InterPro"/>
</dbReference>
<dbReference type="GO" id="GO:0006811">
    <property type="term" value="P:monoatomic ion transport"/>
    <property type="evidence" value="ECO:0007669"/>
    <property type="project" value="UniProtKB-KW"/>
</dbReference>
<dbReference type="CDD" id="cd13131">
    <property type="entry name" value="MATE_NorM_like"/>
    <property type="match status" value="1"/>
</dbReference>
<dbReference type="InterPro" id="IPR002528">
    <property type="entry name" value="MATE_fam"/>
</dbReference>
<dbReference type="InterPro" id="IPR050222">
    <property type="entry name" value="MATE_MdtK"/>
</dbReference>
<dbReference type="InterPro" id="IPR048279">
    <property type="entry name" value="MdtK-like"/>
</dbReference>
<dbReference type="NCBIfam" id="TIGR00797">
    <property type="entry name" value="matE"/>
    <property type="match status" value="1"/>
</dbReference>
<dbReference type="PANTHER" id="PTHR43298:SF2">
    <property type="entry name" value="FMN_FAD EXPORTER YEEO-RELATED"/>
    <property type="match status" value="1"/>
</dbReference>
<dbReference type="PANTHER" id="PTHR43298">
    <property type="entry name" value="MULTIDRUG RESISTANCE PROTEIN NORM-RELATED"/>
    <property type="match status" value="1"/>
</dbReference>
<dbReference type="Pfam" id="PF01554">
    <property type="entry name" value="MatE"/>
    <property type="match status" value="2"/>
</dbReference>
<dbReference type="PIRSF" id="PIRSF006603">
    <property type="entry name" value="DinF"/>
    <property type="match status" value="1"/>
</dbReference>
<gene>
    <name type="primary">norM</name>
    <name type="ordered locus">CC_2020</name>
</gene>
<evidence type="ECO:0000250" key="1"/>
<evidence type="ECO:0000255" key="2"/>
<evidence type="ECO:0000305" key="3"/>
<organism>
    <name type="scientific">Caulobacter vibrioides (strain ATCC 19089 / CIP 103742 / CB 15)</name>
    <name type="common">Caulobacter crescentus</name>
    <dbReference type="NCBI Taxonomy" id="190650"/>
    <lineage>
        <taxon>Bacteria</taxon>
        <taxon>Pseudomonadati</taxon>
        <taxon>Pseudomonadota</taxon>
        <taxon>Alphaproteobacteria</taxon>
        <taxon>Caulobacterales</taxon>
        <taxon>Caulobacteraceae</taxon>
        <taxon>Caulobacter</taxon>
    </lineage>
</organism>
<reference key="1">
    <citation type="journal article" date="2001" name="Proc. Natl. Acad. Sci. U.S.A.">
        <title>Complete genome sequence of Caulobacter crescentus.</title>
        <authorList>
            <person name="Nierman W.C."/>
            <person name="Feldblyum T.V."/>
            <person name="Laub M.T."/>
            <person name="Paulsen I.T."/>
            <person name="Nelson K.E."/>
            <person name="Eisen J.A."/>
            <person name="Heidelberg J.F."/>
            <person name="Alley M.R.K."/>
            <person name="Ohta N."/>
            <person name="Maddock J.R."/>
            <person name="Potocka I."/>
            <person name="Nelson W.C."/>
            <person name="Newton A."/>
            <person name="Stephens C."/>
            <person name="Phadke N.D."/>
            <person name="Ely B."/>
            <person name="DeBoy R.T."/>
            <person name="Dodson R.J."/>
            <person name="Durkin A.S."/>
            <person name="Gwinn M.L."/>
            <person name="Haft D.H."/>
            <person name="Kolonay J.F."/>
            <person name="Smit J."/>
            <person name="Craven M.B."/>
            <person name="Khouri H.M."/>
            <person name="Shetty J."/>
            <person name="Berry K.J."/>
            <person name="Utterback T.R."/>
            <person name="Tran K."/>
            <person name="Wolf A.M."/>
            <person name="Vamathevan J.J."/>
            <person name="Ermolaeva M.D."/>
            <person name="White O."/>
            <person name="Salzberg S.L."/>
            <person name="Venter J.C."/>
            <person name="Shapiro L."/>
            <person name="Fraser C.M."/>
        </authorList>
    </citation>
    <scope>NUCLEOTIDE SEQUENCE [LARGE SCALE GENOMIC DNA]</scope>
    <source>
        <strain>ATCC 19089 / CIP 103742 / CB 15</strain>
    </source>
</reference>
<proteinExistence type="inferred from homology"/>